<reference key="1">
    <citation type="journal article" date="2009" name="J. Bacteriol.">
        <title>Role of conjugative elements in the evolution of the multidrug-resistant pandemic clone Streptococcus pneumoniae Spain23F ST81.</title>
        <authorList>
            <person name="Croucher N.J."/>
            <person name="Walker D."/>
            <person name="Romero P."/>
            <person name="Lennard N."/>
            <person name="Paterson G.K."/>
            <person name="Bason N.C."/>
            <person name="Mitchell A.M."/>
            <person name="Quail M.A."/>
            <person name="Andrew P.W."/>
            <person name="Parkhill J."/>
            <person name="Bentley S.D."/>
            <person name="Mitchell T.J."/>
        </authorList>
    </citation>
    <scope>NUCLEOTIDE SEQUENCE [LARGE SCALE GENOMIC DNA]</scope>
    <source>
        <strain>ATCC 700669 / Spain 23F-1</strain>
    </source>
</reference>
<keyword id="KW-0686">Riboflavin biosynthesis</keyword>
<keyword id="KW-0808">Transferase</keyword>
<sequence length="155" mass="16752">MNTYEGNLVANNIKIGIVVARFNEFITSKLLSGALDNLKRENVNEKDIEVAWVPGAFEIPLIASKMAKSKKYDAIICLGAVIRGNTSHYDYVCSEVSKGIAQISLNSEIPVMFGVLTTDTIEQAIERAGTKAGNKGSECAQGAIEMVNLIRTLDA</sequence>
<accession>B8ZKD0</accession>
<comment type="function">
    <text evidence="1">Catalyzes the formation of 6,7-dimethyl-8-ribityllumazine by condensation of 5-amino-6-(D-ribitylamino)uracil with 3,4-dihydroxy-2-butanone 4-phosphate. This is the penultimate step in the biosynthesis of riboflavin.</text>
</comment>
<comment type="catalytic activity">
    <reaction evidence="1">
        <text>(2S)-2-hydroxy-3-oxobutyl phosphate + 5-amino-6-(D-ribitylamino)uracil = 6,7-dimethyl-8-(1-D-ribityl)lumazine + phosphate + 2 H2O + H(+)</text>
        <dbReference type="Rhea" id="RHEA:26152"/>
        <dbReference type="ChEBI" id="CHEBI:15377"/>
        <dbReference type="ChEBI" id="CHEBI:15378"/>
        <dbReference type="ChEBI" id="CHEBI:15934"/>
        <dbReference type="ChEBI" id="CHEBI:43474"/>
        <dbReference type="ChEBI" id="CHEBI:58201"/>
        <dbReference type="ChEBI" id="CHEBI:58830"/>
        <dbReference type="EC" id="2.5.1.78"/>
    </reaction>
</comment>
<comment type="pathway">
    <text evidence="1">Cofactor biosynthesis; riboflavin biosynthesis; riboflavin from 2-hydroxy-3-oxobutyl phosphate and 5-amino-6-(D-ribitylamino)uracil: step 1/2.</text>
</comment>
<comment type="similarity">
    <text evidence="1">Belongs to the DMRL synthase family.</text>
</comment>
<evidence type="ECO:0000255" key="1">
    <source>
        <dbReference type="HAMAP-Rule" id="MF_00178"/>
    </source>
</evidence>
<gene>
    <name evidence="1" type="primary">ribH</name>
    <name type="ordered locus">SPN23F01720</name>
</gene>
<name>RISB_STRPJ</name>
<feature type="chain" id="PRO_1000195512" description="6,7-dimethyl-8-ribityllumazine synthase">
    <location>
        <begin position="1"/>
        <end position="155"/>
    </location>
</feature>
<feature type="active site" description="Proton donor" evidence="1">
    <location>
        <position position="88"/>
    </location>
</feature>
<feature type="binding site" evidence="1">
    <location>
        <position position="22"/>
    </location>
    <ligand>
        <name>5-amino-6-(D-ribitylamino)uracil</name>
        <dbReference type="ChEBI" id="CHEBI:15934"/>
    </ligand>
</feature>
<feature type="binding site" evidence="1">
    <location>
        <begin position="56"/>
        <end position="58"/>
    </location>
    <ligand>
        <name>5-amino-6-(D-ribitylamino)uracil</name>
        <dbReference type="ChEBI" id="CHEBI:15934"/>
    </ligand>
</feature>
<feature type="binding site" evidence="1">
    <location>
        <begin position="80"/>
        <end position="82"/>
    </location>
    <ligand>
        <name>5-amino-6-(D-ribitylamino)uracil</name>
        <dbReference type="ChEBI" id="CHEBI:15934"/>
    </ligand>
</feature>
<feature type="binding site" evidence="1">
    <location>
        <begin position="85"/>
        <end position="86"/>
    </location>
    <ligand>
        <name>(2S)-2-hydroxy-3-oxobutyl phosphate</name>
        <dbReference type="ChEBI" id="CHEBI:58830"/>
    </ligand>
</feature>
<feature type="binding site" evidence="1">
    <location>
        <position position="113"/>
    </location>
    <ligand>
        <name>5-amino-6-(D-ribitylamino)uracil</name>
        <dbReference type="ChEBI" id="CHEBI:15934"/>
    </ligand>
</feature>
<feature type="binding site" evidence="1">
    <location>
        <position position="127"/>
    </location>
    <ligand>
        <name>(2S)-2-hydroxy-3-oxobutyl phosphate</name>
        <dbReference type="ChEBI" id="CHEBI:58830"/>
    </ligand>
</feature>
<proteinExistence type="inferred from homology"/>
<organism>
    <name type="scientific">Streptococcus pneumoniae (strain ATCC 700669 / Spain 23F-1)</name>
    <dbReference type="NCBI Taxonomy" id="561276"/>
    <lineage>
        <taxon>Bacteria</taxon>
        <taxon>Bacillati</taxon>
        <taxon>Bacillota</taxon>
        <taxon>Bacilli</taxon>
        <taxon>Lactobacillales</taxon>
        <taxon>Streptococcaceae</taxon>
        <taxon>Streptococcus</taxon>
    </lineage>
</organism>
<protein>
    <recommendedName>
        <fullName evidence="1">6,7-dimethyl-8-ribityllumazine synthase</fullName>
        <shortName evidence="1">DMRL synthase</shortName>
        <shortName evidence="1">LS</shortName>
        <shortName evidence="1">Lumazine synthase</shortName>
        <ecNumber evidence="1">2.5.1.78</ecNumber>
    </recommendedName>
</protein>
<dbReference type="EC" id="2.5.1.78" evidence="1"/>
<dbReference type="EMBL" id="FM211187">
    <property type="protein sequence ID" value="CAR68032.1"/>
    <property type="molecule type" value="Genomic_DNA"/>
</dbReference>
<dbReference type="SMR" id="B8ZKD0"/>
<dbReference type="KEGG" id="sne:SPN23F01720"/>
<dbReference type="HOGENOM" id="CLU_089358_1_1_9"/>
<dbReference type="UniPathway" id="UPA00275">
    <property type="reaction ID" value="UER00404"/>
</dbReference>
<dbReference type="GO" id="GO:0005829">
    <property type="term" value="C:cytosol"/>
    <property type="evidence" value="ECO:0007669"/>
    <property type="project" value="TreeGrafter"/>
</dbReference>
<dbReference type="GO" id="GO:0009349">
    <property type="term" value="C:riboflavin synthase complex"/>
    <property type="evidence" value="ECO:0007669"/>
    <property type="project" value="InterPro"/>
</dbReference>
<dbReference type="GO" id="GO:0000906">
    <property type="term" value="F:6,7-dimethyl-8-ribityllumazine synthase activity"/>
    <property type="evidence" value="ECO:0007669"/>
    <property type="project" value="UniProtKB-UniRule"/>
</dbReference>
<dbReference type="GO" id="GO:0009231">
    <property type="term" value="P:riboflavin biosynthetic process"/>
    <property type="evidence" value="ECO:0007669"/>
    <property type="project" value="UniProtKB-UniRule"/>
</dbReference>
<dbReference type="CDD" id="cd09209">
    <property type="entry name" value="Lumazine_synthase-I"/>
    <property type="match status" value="1"/>
</dbReference>
<dbReference type="FunFam" id="3.40.50.960:FF:000001">
    <property type="entry name" value="6,7-dimethyl-8-ribityllumazine synthase"/>
    <property type="match status" value="1"/>
</dbReference>
<dbReference type="Gene3D" id="3.40.50.960">
    <property type="entry name" value="Lumazine/riboflavin synthase"/>
    <property type="match status" value="1"/>
</dbReference>
<dbReference type="HAMAP" id="MF_00178">
    <property type="entry name" value="Lumazine_synth"/>
    <property type="match status" value="1"/>
</dbReference>
<dbReference type="InterPro" id="IPR034964">
    <property type="entry name" value="LS"/>
</dbReference>
<dbReference type="InterPro" id="IPR002180">
    <property type="entry name" value="LS/RS"/>
</dbReference>
<dbReference type="InterPro" id="IPR036467">
    <property type="entry name" value="LS/RS_sf"/>
</dbReference>
<dbReference type="NCBIfam" id="TIGR00114">
    <property type="entry name" value="lumazine-synth"/>
    <property type="match status" value="1"/>
</dbReference>
<dbReference type="NCBIfam" id="NF000812">
    <property type="entry name" value="PRK00061.1-4"/>
    <property type="match status" value="1"/>
</dbReference>
<dbReference type="PANTHER" id="PTHR21058:SF0">
    <property type="entry name" value="6,7-DIMETHYL-8-RIBITYLLUMAZINE SYNTHASE"/>
    <property type="match status" value="1"/>
</dbReference>
<dbReference type="PANTHER" id="PTHR21058">
    <property type="entry name" value="6,7-DIMETHYL-8-RIBITYLLUMAZINE SYNTHASE DMRL SYNTHASE LUMAZINE SYNTHASE"/>
    <property type="match status" value="1"/>
</dbReference>
<dbReference type="Pfam" id="PF00885">
    <property type="entry name" value="DMRL_synthase"/>
    <property type="match status" value="1"/>
</dbReference>
<dbReference type="SUPFAM" id="SSF52121">
    <property type="entry name" value="Lumazine synthase"/>
    <property type="match status" value="1"/>
</dbReference>